<sequence length="549" mass="57375">MAAKDIRFGEDARSRMVRGVNVLANAVKATLGPKGRNVVLEKSFGAPTITKDGVSVAKEIELADKFENMGAQMVKEVASRTNDDAGDGTTTATVLAQALIREGAKAVAAGMNPMDLKRGIDKAVSAAVAELKNISKPTADDKAIAQVGTISANSDESIGQIIADAMKEVGKEGVITVEEGSGLDNELDVVKGMQFDRGYLSPYFINNQQSQTADLDDPFILLHDKKISNVRDLLPVLEGVAKAGKPLLIVAEEVEGEALATLVVNTIRGIVKVVAVKAPGFGDRRKAMLEDMAVLTGGTVISEEVGLSLEKATIKDLGRAKKVQVSKENTTIIDGVGDKANVDARVAQIKTQIQDTSSDYDREKLQERVAKLAGGVAVIKVGASTEIEMKEKKDRVDDALHATRAAVEEGVVPGGGVALVRAITALAGLKGANEDQNHGIQIALRAMEAPLREIVANAGDEPSVIINKVKEGTGSFGYNAATGEFGDMLQFGILDPTKVTRSALQNAASIAGLMITTEAMVAEAPKKDEPAMGGAGGMGGMGGMGGMDF</sequence>
<evidence type="ECO:0000255" key="1">
    <source>
        <dbReference type="HAMAP-Rule" id="MF_00600"/>
    </source>
</evidence>
<dbReference type="EC" id="5.6.1.7" evidence="1"/>
<dbReference type="EMBL" id="AM743169">
    <property type="protein sequence ID" value="CAQ47604.1"/>
    <property type="molecule type" value="Genomic_DNA"/>
</dbReference>
<dbReference type="RefSeq" id="WP_005411226.1">
    <property type="nucleotide sequence ID" value="NC_010943.1"/>
</dbReference>
<dbReference type="SMR" id="B2FIU9"/>
<dbReference type="EnsemblBacteria" id="CAQ47604">
    <property type="protein sequence ID" value="CAQ47604"/>
    <property type="gene ID" value="Smlt4214"/>
</dbReference>
<dbReference type="GeneID" id="97262865"/>
<dbReference type="KEGG" id="sml:Smlt4214"/>
<dbReference type="eggNOG" id="COG0459">
    <property type="taxonomic scope" value="Bacteria"/>
</dbReference>
<dbReference type="HOGENOM" id="CLU_016503_3_0_6"/>
<dbReference type="Proteomes" id="UP000008840">
    <property type="component" value="Chromosome"/>
</dbReference>
<dbReference type="GO" id="GO:0005737">
    <property type="term" value="C:cytoplasm"/>
    <property type="evidence" value="ECO:0007669"/>
    <property type="project" value="UniProtKB-SubCell"/>
</dbReference>
<dbReference type="GO" id="GO:0005524">
    <property type="term" value="F:ATP binding"/>
    <property type="evidence" value="ECO:0007669"/>
    <property type="project" value="UniProtKB-UniRule"/>
</dbReference>
<dbReference type="GO" id="GO:0140662">
    <property type="term" value="F:ATP-dependent protein folding chaperone"/>
    <property type="evidence" value="ECO:0007669"/>
    <property type="project" value="InterPro"/>
</dbReference>
<dbReference type="GO" id="GO:0016853">
    <property type="term" value="F:isomerase activity"/>
    <property type="evidence" value="ECO:0007669"/>
    <property type="project" value="UniProtKB-KW"/>
</dbReference>
<dbReference type="GO" id="GO:0051082">
    <property type="term" value="F:unfolded protein binding"/>
    <property type="evidence" value="ECO:0007669"/>
    <property type="project" value="UniProtKB-UniRule"/>
</dbReference>
<dbReference type="GO" id="GO:0042026">
    <property type="term" value="P:protein refolding"/>
    <property type="evidence" value="ECO:0007669"/>
    <property type="project" value="UniProtKB-UniRule"/>
</dbReference>
<dbReference type="CDD" id="cd03344">
    <property type="entry name" value="GroEL"/>
    <property type="match status" value="1"/>
</dbReference>
<dbReference type="FunFam" id="1.10.560.10:FF:000001">
    <property type="entry name" value="60 kDa chaperonin"/>
    <property type="match status" value="1"/>
</dbReference>
<dbReference type="FunFam" id="3.50.7.10:FF:000001">
    <property type="entry name" value="60 kDa chaperonin"/>
    <property type="match status" value="1"/>
</dbReference>
<dbReference type="Gene3D" id="3.50.7.10">
    <property type="entry name" value="GroEL"/>
    <property type="match status" value="1"/>
</dbReference>
<dbReference type="Gene3D" id="1.10.560.10">
    <property type="entry name" value="GroEL-like equatorial domain"/>
    <property type="match status" value="1"/>
</dbReference>
<dbReference type="Gene3D" id="3.30.260.10">
    <property type="entry name" value="TCP-1-like chaperonin intermediate domain"/>
    <property type="match status" value="1"/>
</dbReference>
<dbReference type="HAMAP" id="MF_00600">
    <property type="entry name" value="CH60"/>
    <property type="match status" value="1"/>
</dbReference>
<dbReference type="InterPro" id="IPR018370">
    <property type="entry name" value="Chaperonin_Cpn60_CS"/>
</dbReference>
<dbReference type="InterPro" id="IPR001844">
    <property type="entry name" value="Cpn60/GroEL"/>
</dbReference>
<dbReference type="InterPro" id="IPR002423">
    <property type="entry name" value="Cpn60/GroEL/TCP-1"/>
</dbReference>
<dbReference type="InterPro" id="IPR027409">
    <property type="entry name" value="GroEL-like_apical_dom_sf"/>
</dbReference>
<dbReference type="InterPro" id="IPR027413">
    <property type="entry name" value="GROEL-like_equatorial_sf"/>
</dbReference>
<dbReference type="InterPro" id="IPR027410">
    <property type="entry name" value="TCP-1-like_intermed_sf"/>
</dbReference>
<dbReference type="NCBIfam" id="TIGR02348">
    <property type="entry name" value="GroEL"/>
    <property type="match status" value="1"/>
</dbReference>
<dbReference type="NCBIfam" id="NF000592">
    <property type="entry name" value="PRK00013.1"/>
    <property type="match status" value="1"/>
</dbReference>
<dbReference type="NCBIfam" id="NF009487">
    <property type="entry name" value="PRK12849.1"/>
    <property type="match status" value="1"/>
</dbReference>
<dbReference type="NCBIfam" id="NF009488">
    <property type="entry name" value="PRK12850.1"/>
    <property type="match status" value="1"/>
</dbReference>
<dbReference type="NCBIfam" id="NF009489">
    <property type="entry name" value="PRK12851.1"/>
    <property type="match status" value="1"/>
</dbReference>
<dbReference type="PANTHER" id="PTHR45633">
    <property type="entry name" value="60 KDA HEAT SHOCK PROTEIN, MITOCHONDRIAL"/>
    <property type="match status" value="1"/>
</dbReference>
<dbReference type="Pfam" id="PF00118">
    <property type="entry name" value="Cpn60_TCP1"/>
    <property type="match status" value="1"/>
</dbReference>
<dbReference type="PRINTS" id="PR00298">
    <property type="entry name" value="CHAPERONIN60"/>
</dbReference>
<dbReference type="SUPFAM" id="SSF52029">
    <property type="entry name" value="GroEL apical domain-like"/>
    <property type="match status" value="1"/>
</dbReference>
<dbReference type="SUPFAM" id="SSF48592">
    <property type="entry name" value="GroEL equatorial domain-like"/>
    <property type="match status" value="1"/>
</dbReference>
<dbReference type="SUPFAM" id="SSF54849">
    <property type="entry name" value="GroEL-intermediate domain like"/>
    <property type="match status" value="1"/>
</dbReference>
<dbReference type="PROSITE" id="PS00296">
    <property type="entry name" value="CHAPERONINS_CPN60"/>
    <property type="match status" value="1"/>
</dbReference>
<accession>B2FIU9</accession>
<feature type="chain" id="PRO_1000130063" description="Chaperonin GroEL">
    <location>
        <begin position="1"/>
        <end position="549"/>
    </location>
</feature>
<feature type="binding site" evidence="1">
    <location>
        <begin position="30"/>
        <end position="33"/>
    </location>
    <ligand>
        <name>ATP</name>
        <dbReference type="ChEBI" id="CHEBI:30616"/>
    </ligand>
</feature>
<feature type="binding site" evidence="1">
    <location>
        <position position="51"/>
    </location>
    <ligand>
        <name>ATP</name>
        <dbReference type="ChEBI" id="CHEBI:30616"/>
    </ligand>
</feature>
<feature type="binding site" evidence="1">
    <location>
        <begin position="87"/>
        <end position="91"/>
    </location>
    <ligand>
        <name>ATP</name>
        <dbReference type="ChEBI" id="CHEBI:30616"/>
    </ligand>
</feature>
<feature type="binding site" evidence="1">
    <location>
        <position position="415"/>
    </location>
    <ligand>
        <name>ATP</name>
        <dbReference type="ChEBI" id="CHEBI:30616"/>
    </ligand>
</feature>
<feature type="binding site" evidence="1">
    <location>
        <begin position="479"/>
        <end position="481"/>
    </location>
    <ligand>
        <name>ATP</name>
        <dbReference type="ChEBI" id="CHEBI:30616"/>
    </ligand>
</feature>
<feature type="binding site" evidence="1">
    <location>
        <position position="495"/>
    </location>
    <ligand>
        <name>ATP</name>
        <dbReference type="ChEBI" id="CHEBI:30616"/>
    </ligand>
</feature>
<proteinExistence type="inferred from homology"/>
<gene>
    <name evidence="1" type="primary">groEL</name>
    <name evidence="1" type="synonym">groL</name>
    <name type="ordered locus">Smlt4214</name>
</gene>
<comment type="function">
    <text evidence="1">Together with its co-chaperonin GroES, plays an essential role in assisting protein folding. The GroEL-GroES system forms a nano-cage that allows encapsulation of the non-native substrate proteins and provides a physical environment optimized to promote and accelerate protein folding.</text>
</comment>
<comment type="catalytic activity">
    <reaction evidence="1">
        <text>ATP + H2O + a folded polypeptide = ADP + phosphate + an unfolded polypeptide.</text>
        <dbReference type="EC" id="5.6.1.7"/>
    </reaction>
</comment>
<comment type="subunit">
    <text evidence="1">Forms a cylinder of 14 subunits composed of two heptameric rings stacked back-to-back. Interacts with the co-chaperonin GroES.</text>
</comment>
<comment type="subcellular location">
    <subcellularLocation>
        <location evidence="1">Cytoplasm</location>
    </subcellularLocation>
</comment>
<comment type="similarity">
    <text evidence="1">Belongs to the chaperonin (HSP60) family.</text>
</comment>
<name>CH60_STRMK</name>
<protein>
    <recommendedName>
        <fullName evidence="1">Chaperonin GroEL</fullName>
        <ecNumber evidence="1">5.6.1.7</ecNumber>
    </recommendedName>
    <alternativeName>
        <fullName evidence="1">60 kDa chaperonin</fullName>
    </alternativeName>
    <alternativeName>
        <fullName evidence="1">Chaperonin-60</fullName>
        <shortName evidence="1">Cpn60</shortName>
    </alternativeName>
</protein>
<reference key="1">
    <citation type="journal article" date="2008" name="Genome Biol.">
        <title>The complete genome, comparative and functional analysis of Stenotrophomonas maltophilia reveals an organism heavily shielded by drug resistance determinants.</title>
        <authorList>
            <person name="Crossman L.C."/>
            <person name="Gould V.C."/>
            <person name="Dow J.M."/>
            <person name="Vernikos G.S."/>
            <person name="Okazaki A."/>
            <person name="Sebaihia M."/>
            <person name="Saunders D."/>
            <person name="Arrowsmith C."/>
            <person name="Carver T."/>
            <person name="Peters N."/>
            <person name="Adlem E."/>
            <person name="Kerhornou A."/>
            <person name="Lord A."/>
            <person name="Murphy L."/>
            <person name="Seeger K."/>
            <person name="Squares R."/>
            <person name="Rutter S."/>
            <person name="Quail M.A."/>
            <person name="Rajandream M.A."/>
            <person name="Harris D."/>
            <person name="Churcher C."/>
            <person name="Bentley S.D."/>
            <person name="Parkhill J."/>
            <person name="Thomson N.R."/>
            <person name="Avison M.B."/>
        </authorList>
    </citation>
    <scope>NUCLEOTIDE SEQUENCE [LARGE SCALE GENOMIC DNA]</scope>
    <source>
        <strain>K279a</strain>
    </source>
</reference>
<keyword id="KW-0067">ATP-binding</keyword>
<keyword id="KW-0143">Chaperone</keyword>
<keyword id="KW-0963">Cytoplasm</keyword>
<keyword id="KW-0413">Isomerase</keyword>
<keyword id="KW-0547">Nucleotide-binding</keyword>
<keyword id="KW-1185">Reference proteome</keyword>
<organism>
    <name type="scientific">Stenotrophomonas maltophilia (strain K279a)</name>
    <dbReference type="NCBI Taxonomy" id="522373"/>
    <lineage>
        <taxon>Bacteria</taxon>
        <taxon>Pseudomonadati</taxon>
        <taxon>Pseudomonadota</taxon>
        <taxon>Gammaproteobacteria</taxon>
        <taxon>Lysobacterales</taxon>
        <taxon>Lysobacteraceae</taxon>
        <taxon>Stenotrophomonas</taxon>
        <taxon>Stenotrophomonas maltophilia group</taxon>
    </lineage>
</organism>